<accession>B6I1X9</accession>
<evidence type="ECO:0000255" key="1">
    <source>
        <dbReference type="HAMAP-Rule" id="MF_00735"/>
    </source>
</evidence>
<name>PRMA_ECOSE</name>
<comment type="function">
    <text evidence="1">Methylates ribosomal protein L11.</text>
</comment>
<comment type="catalytic activity">
    <reaction evidence="1">
        <text>L-lysyl-[protein] + 3 S-adenosyl-L-methionine = N(6),N(6),N(6)-trimethyl-L-lysyl-[protein] + 3 S-adenosyl-L-homocysteine + 3 H(+)</text>
        <dbReference type="Rhea" id="RHEA:54192"/>
        <dbReference type="Rhea" id="RHEA-COMP:9752"/>
        <dbReference type="Rhea" id="RHEA-COMP:13826"/>
        <dbReference type="ChEBI" id="CHEBI:15378"/>
        <dbReference type="ChEBI" id="CHEBI:29969"/>
        <dbReference type="ChEBI" id="CHEBI:57856"/>
        <dbReference type="ChEBI" id="CHEBI:59789"/>
        <dbReference type="ChEBI" id="CHEBI:61961"/>
    </reaction>
</comment>
<comment type="subcellular location">
    <subcellularLocation>
        <location evidence="1">Cytoplasm</location>
    </subcellularLocation>
</comment>
<comment type="similarity">
    <text evidence="1">Belongs to the methyltransferase superfamily. PrmA family.</text>
</comment>
<feature type="chain" id="PRO_1000192622" description="Ribosomal protein L11 methyltransferase">
    <location>
        <begin position="1"/>
        <end position="293"/>
    </location>
</feature>
<feature type="binding site" evidence="1">
    <location>
        <position position="145"/>
    </location>
    <ligand>
        <name>S-adenosyl-L-methionine</name>
        <dbReference type="ChEBI" id="CHEBI:59789"/>
    </ligand>
</feature>
<feature type="binding site" evidence="1">
    <location>
        <position position="166"/>
    </location>
    <ligand>
        <name>S-adenosyl-L-methionine</name>
        <dbReference type="ChEBI" id="CHEBI:59789"/>
    </ligand>
</feature>
<feature type="binding site" evidence="1">
    <location>
        <position position="188"/>
    </location>
    <ligand>
        <name>S-adenosyl-L-methionine</name>
        <dbReference type="ChEBI" id="CHEBI:59789"/>
    </ligand>
</feature>
<feature type="binding site" evidence="1">
    <location>
        <position position="230"/>
    </location>
    <ligand>
        <name>S-adenosyl-L-methionine</name>
        <dbReference type="ChEBI" id="CHEBI:59789"/>
    </ligand>
</feature>
<dbReference type="EC" id="2.1.1.-" evidence="1"/>
<dbReference type="EMBL" id="AP009240">
    <property type="protein sequence ID" value="BAG79064.1"/>
    <property type="molecule type" value="Genomic_DNA"/>
</dbReference>
<dbReference type="RefSeq" id="WP_001145827.1">
    <property type="nucleotide sequence ID" value="NC_011415.1"/>
</dbReference>
<dbReference type="SMR" id="B6I1X9"/>
<dbReference type="GeneID" id="75206107"/>
<dbReference type="KEGG" id="ecy:ECSE_3540"/>
<dbReference type="HOGENOM" id="CLU_049382_4_1_6"/>
<dbReference type="Proteomes" id="UP000008199">
    <property type="component" value="Chromosome"/>
</dbReference>
<dbReference type="GO" id="GO:0005829">
    <property type="term" value="C:cytosol"/>
    <property type="evidence" value="ECO:0007669"/>
    <property type="project" value="TreeGrafter"/>
</dbReference>
<dbReference type="GO" id="GO:0016279">
    <property type="term" value="F:protein-lysine N-methyltransferase activity"/>
    <property type="evidence" value="ECO:0007669"/>
    <property type="project" value="TreeGrafter"/>
</dbReference>
<dbReference type="GO" id="GO:0032259">
    <property type="term" value="P:methylation"/>
    <property type="evidence" value="ECO:0007669"/>
    <property type="project" value="UniProtKB-KW"/>
</dbReference>
<dbReference type="CDD" id="cd02440">
    <property type="entry name" value="AdoMet_MTases"/>
    <property type="match status" value="1"/>
</dbReference>
<dbReference type="FunFam" id="3.40.50.150:FF:000021">
    <property type="entry name" value="Ribosomal protein L11 methyltransferase"/>
    <property type="match status" value="1"/>
</dbReference>
<dbReference type="Gene3D" id="3.40.50.150">
    <property type="entry name" value="Vaccinia Virus protein VP39"/>
    <property type="match status" value="1"/>
</dbReference>
<dbReference type="HAMAP" id="MF_00735">
    <property type="entry name" value="Methyltr_PrmA"/>
    <property type="match status" value="1"/>
</dbReference>
<dbReference type="InterPro" id="IPR050078">
    <property type="entry name" value="Ribosomal_L11_MeTrfase_PrmA"/>
</dbReference>
<dbReference type="InterPro" id="IPR004498">
    <property type="entry name" value="Ribosomal_PrmA_MeTrfase"/>
</dbReference>
<dbReference type="InterPro" id="IPR029063">
    <property type="entry name" value="SAM-dependent_MTases_sf"/>
</dbReference>
<dbReference type="NCBIfam" id="TIGR00406">
    <property type="entry name" value="prmA"/>
    <property type="match status" value="1"/>
</dbReference>
<dbReference type="PANTHER" id="PTHR43648">
    <property type="entry name" value="ELECTRON TRANSFER FLAVOPROTEIN BETA SUBUNIT LYSINE METHYLTRANSFERASE"/>
    <property type="match status" value="1"/>
</dbReference>
<dbReference type="PANTHER" id="PTHR43648:SF1">
    <property type="entry name" value="ELECTRON TRANSFER FLAVOPROTEIN BETA SUBUNIT LYSINE METHYLTRANSFERASE"/>
    <property type="match status" value="1"/>
</dbReference>
<dbReference type="Pfam" id="PF06325">
    <property type="entry name" value="PrmA"/>
    <property type="match status" value="1"/>
</dbReference>
<dbReference type="PIRSF" id="PIRSF000401">
    <property type="entry name" value="RPL11_MTase"/>
    <property type="match status" value="1"/>
</dbReference>
<dbReference type="SUPFAM" id="SSF53335">
    <property type="entry name" value="S-adenosyl-L-methionine-dependent methyltransferases"/>
    <property type="match status" value="1"/>
</dbReference>
<reference key="1">
    <citation type="journal article" date="2008" name="DNA Res.">
        <title>Complete genome sequence and comparative analysis of the wild-type commensal Escherichia coli strain SE11 isolated from a healthy adult.</title>
        <authorList>
            <person name="Oshima K."/>
            <person name="Toh H."/>
            <person name="Ogura Y."/>
            <person name="Sasamoto H."/>
            <person name="Morita H."/>
            <person name="Park S.-H."/>
            <person name="Ooka T."/>
            <person name="Iyoda S."/>
            <person name="Taylor T.D."/>
            <person name="Hayashi T."/>
            <person name="Itoh K."/>
            <person name="Hattori M."/>
        </authorList>
    </citation>
    <scope>NUCLEOTIDE SEQUENCE [LARGE SCALE GENOMIC DNA]</scope>
    <source>
        <strain>SE11</strain>
    </source>
</reference>
<protein>
    <recommendedName>
        <fullName evidence="1">Ribosomal protein L11 methyltransferase</fullName>
        <shortName evidence="1">L11 Mtase</shortName>
        <ecNumber evidence="1">2.1.1.-</ecNumber>
    </recommendedName>
</protein>
<gene>
    <name evidence="1" type="primary">prmA</name>
    <name type="ordered locus">ECSE_3540</name>
</gene>
<organism>
    <name type="scientific">Escherichia coli (strain SE11)</name>
    <dbReference type="NCBI Taxonomy" id="409438"/>
    <lineage>
        <taxon>Bacteria</taxon>
        <taxon>Pseudomonadati</taxon>
        <taxon>Pseudomonadota</taxon>
        <taxon>Gammaproteobacteria</taxon>
        <taxon>Enterobacterales</taxon>
        <taxon>Enterobacteriaceae</taxon>
        <taxon>Escherichia</taxon>
    </lineage>
</organism>
<proteinExistence type="inferred from homology"/>
<keyword id="KW-0963">Cytoplasm</keyword>
<keyword id="KW-0489">Methyltransferase</keyword>
<keyword id="KW-0949">S-adenosyl-L-methionine</keyword>
<keyword id="KW-0808">Transferase</keyword>
<sequence>MPWIQLKLNTTGANAEDLSDALMEAGAVSITFQDTHDTPVFEPLPGETRLWGDTDVIGLFDAETDMNDVVAILENHPLLGAGFAHKIEQLEDKDWEREWMDNFHPMRFGERLWICPSWRDVPDENAVNVMLDPGLAFGTGTHPTTSLCLQWLDSLDLTGKTVIDFGCGSGILAIAALKLGAAKAIGIDIDPQAIQASRDNAERNGVSDRLELYLPKDQPEEMKADVVVANILAGPLRELAPLISVLPVSGGLLGLSGILASQAESVCEAYADSFALDPVVEKEEWCRITGRKN</sequence>